<reference key="1">
    <citation type="journal article" date="1997" name="Biochem. Biophys. Res. Commun.">
        <title>Molecular cloning and characterization of the mouse apoptosis signal-regulating kinase 1.</title>
        <authorList>
            <person name="Tobiume K."/>
            <person name="Inage T."/>
            <person name="Takeda K."/>
            <person name="Enomoto S."/>
            <person name="Miyazono K."/>
            <person name="Ichijo H."/>
        </authorList>
    </citation>
    <scope>NUCLEOTIDE SEQUENCE [MRNA]</scope>
    <scope>TISSUE SPECIFICITY</scope>
</reference>
<reference key="2">
    <citation type="submission" date="2005-07" db="EMBL/GenBank/DDBJ databases">
        <authorList>
            <person name="Tobiume K."/>
            <person name="Inage T."/>
            <person name="Takeda K."/>
            <person name="Enomoto S."/>
            <person name="Miyazono K."/>
            <person name="Ichijo H."/>
        </authorList>
    </citation>
    <scope>SEQUENCE REVISION TO 22-26; 123; 273; 755; 1001-1011; 1220-1222 AND 1274-1280</scope>
</reference>
<reference key="3">
    <citation type="journal article" date="2004" name="Genome Res.">
        <title>The status, quality, and expansion of the NIH full-length cDNA project: the Mammalian Gene Collection (MGC).</title>
        <authorList>
            <consortium name="The MGC Project Team"/>
        </authorList>
    </citation>
    <scope>NUCLEOTIDE SEQUENCE [LARGE SCALE MRNA]</scope>
</reference>
<reference key="4">
    <citation type="journal article" date="2001" name="EMBO Rep.">
        <title>ASK1 is required for sustained activations of JNK/p38 MAP kinases and apoptosis.</title>
        <authorList>
            <person name="Tobiume K."/>
            <person name="Matsuzawa A."/>
            <person name="Takahashi T."/>
            <person name="Nishitoh H."/>
            <person name="Morita K."/>
            <person name="Takeda K."/>
            <person name="Minowa O."/>
            <person name="Miyazono K."/>
            <person name="Noda T."/>
            <person name="Ichijo H."/>
        </authorList>
    </citation>
    <scope>FUNCTION</scope>
</reference>
<reference key="5">
    <citation type="journal article" date="2002" name="J. Cell. Physiol.">
        <title>Activation of apoptosis signal-regulating kinase 1 by the stress-induced activating phosphorylation of pre-formed oligomer.</title>
        <authorList>
            <person name="Tobiume K."/>
            <person name="Saitoh M."/>
            <person name="Ichijo H."/>
        </authorList>
    </citation>
    <scope>PHOSPHORYLATION AT THR-845 AND THR-849</scope>
    <scope>ACTIVITY REGULATION</scope>
</reference>
<reference key="6">
    <citation type="journal article" date="2004" name="EMBO Rep.">
        <title>Involvement of ASK1 in Ca2+-induced p38 MAP kinase activation.</title>
        <authorList>
            <person name="Takeda K."/>
            <person name="Matsuzawa A."/>
            <person name="Nishitoh H."/>
            <person name="Tobiume K."/>
            <person name="Kishida S."/>
            <person name="Ninomiya-Tsuji J."/>
            <person name="Matsumoto K."/>
            <person name="Ichijo H."/>
        </authorList>
    </citation>
    <scope>FUNCTION</scope>
</reference>
<reference key="7">
    <citation type="journal article" date="2005" name="Nat. Immunol.">
        <title>ROS-dependent activation of the TRAF6-ASK1-p38 pathway is selectively required for TLR4-mediated innate immunity.</title>
        <authorList>
            <person name="Matsuzawa A."/>
            <person name="Saegusa K."/>
            <person name="Noguchi T."/>
            <person name="Sadamitsu C."/>
            <person name="Nishitoh H."/>
            <person name="Nagai S."/>
            <person name="Koyasu S."/>
            <person name="Matsumoto K."/>
            <person name="Takeda K."/>
            <person name="Ichijo H."/>
        </authorList>
    </citation>
    <scope>FUNCTION</scope>
    <scope>ACTIVITY REGULATION</scope>
    <scope>INTERACTION WITH TRAF6</scope>
</reference>
<reference key="8">
    <citation type="journal article" date="2006" name="Blood">
        <title>A balance between Raf-1 and Fas expression sets the pace of erythroid differentiation.</title>
        <authorList>
            <person name="Rubiolo C."/>
            <person name="Piazzolla D."/>
            <person name="Meissl K."/>
            <person name="Beug H."/>
            <person name="Huber J.C."/>
            <person name="Kolbus A."/>
            <person name="Baccarini M."/>
        </authorList>
    </citation>
    <scope>FUNCTION</scope>
</reference>
<reference key="9">
    <citation type="journal article" date="2006" name="Mol. Cell. Biol.">
        <title>Direct interaction and reciprocal regulation between ASK1 and calcineurin-NFAT control cardiomyocyte death and growth.</title>
        <authorList>
            <person name="Liu Q."/>
            <person name="Wilkins B.J."/>
            <person name="Lee Y.J."/>
            <person name="Ichijo H."/>
            <person name="Molkentin J.D."/>
        </authorList>
    </citation>
    <scope>INTERACTION WITH PPP3R1</scope>
    <scope>PHOSPHORYLATION AT SER-973</scope>
    <scope>ACTIVITY REGULATION</scope>
    <scope>FUNCTION</scope>
    <scope>CATALYTIC ACTIVITY</scope>
</reference>
<reference key="10">
    <citation type="journal article" date="2007" name="Biochem. J.">
        <title>Regulation of apoptosis signal-regulating kinase 1 by protein phosphatase 2Cepsilon.</title>
        <authorList>
            <person name="Saito J."/>
            <person name="Toriumi S."/>
            <person name="Awano K."/>
            <person name="Ichijo H."/>
            <person name="Sasaki K."/>
            <person name="Kobayashi T."/>
            <person name="Tamura S."/>
        </authorList>
    </citation>
    <scope>INTERACTION WITH PPM1L</scope>
</reference>
<reference key="11">
    <citation type="journal article" date="2008" name="J. Biol. Chem.">
        <title>Murine protein serine/threonine kinase 38 activates apoptosis signal-regulating kinase 1 via Thr 838 phosphorylation.</title>
        <authorList>
            <person name="Jung H."/>
            <person name="Seong H.A."/>
            <person name="Ha H."/>
        </authorList>
    </citation>
    <scope>PHOSPHORYLATION AT THR-845</scope>
</reference>
<reference key="12">
    <citation type="journal article" date="2008" name="Annu. Rev. Pharmacol. Toxicol.">
        <title>Apoptosis signal-regulating kinase 1 in stress and immune response.</title>
        <authorList>
            <person name="Takeda K."/>
            <person name="Noguchi T."/>
            <person name="Naguro I."/>
            <person name="Ichijo H."/>
        </authorList>
    </citation>
    <scope>REVIEW ON ACTIVITY REGULATION</scope>
    <scope>REVIEW ON FUNCTION</scope>
</reference>
<reference key="13">
    <citation type="journal article" date="2009" name="Cell Commun. Signal.">
        <title>The roles of ASK family proteins in stress responses and diseases.</title>
        <authorList>
            <person name="Hattori K."/>
            <person name="Naguro I."/>
            <person name="Runchel C."/>
            <person name="Ichijo H."/>
        </authorList>
    </citation>
    <scope>REVIEW ON ACTIVITY REGULATION</scope>
    <scope>REVIEW ON FUNCTION</scope>
</reference>
<reference key="14">
    <citation type="journal article" date="2010" name="Cell">
        <title>A tissue-specific atlas of mouse protein phosphorylation and expression.</title>
        <authorList>
            <person name="Huttlin E.L."/>
            <person name="Jedrychowski M.P."/>
            <person name="Elias J.E."/>
            <person name="Goswami T."/>
            <person name="Rad R."/>
            <person name="Beausoleil S.A."/>
            <person name="Villen J."/>
            <person name="Haas W."/>
            <person name="Sowa M.E."/>
            <person name="Gygi S.P."/>
        </authorList>
    </citation>
    <scope>IDENTIFICATION BY MASS SPECTROMETRY [LARGE SCALE ANALYSIS]</scope>
    <source>
        <tissue>Brain</tissue>
        <tissue>Brown adipose tissue</tissue>
        <tissue>Heart</tissue>
        <tissue>Lung</tissue>
        <tissue>Pancreas</tissue>
        <tissue>Spleen</tissue>
    </source>
</reference>
<reference key="15">
    <citation type="journal article" date="2012" name="J. Biol. Chem.">
        <title>S100 proteins modulate protein phosphatase 5 function: a link between CA2+ signal transduction and protein dephosphorylation.</title>
        <authorList>
            <person name="Yamaguchi F."/>
            <person name="Umeda Y."/>
            <person name="Shimamoto S."/>
            <person name="Tsuchiya M."/>
            <person name="Tokumitsu H."/>
            <person name="Tokuda M."/>
            <person name="Kobayashi R."/>
        </authorList>
    </citation>
    <scope>INTERACTION WITH PPP5C</scope>
    <scope>PHOSPHORYLATION AT THR-845</scope>
    <scope>DEPHOSPHORYLATION AT THR-845 BY PPP5C</scope>
</reference>
<evidence type="ECO:0000250" key="1"/>
<evidence type="ECO:0000250" key="2">
    <source>
        <dbReference type="UniProtKB" id="Q99683"/>
    </source>
</evidence>
<evidence type="ECO:0000255" key="3"/>
<evidence type="ECO:0000255" key="4">
    <source>
        <dbReference type="PROSITE-ProRule" id="PRU00159"/>
    </source>
</evidence>
<evidence type="ECO:0000255" key="5">
    <source>
        <dbReference type="PROSITE-ProRule" id="PRU10027"/>
    </source>
</evidence>
<evidence type="ECO:0000256" key="6">
    <source>
        <dbReference type="SAM" id="MobiDB-lite"/>
    </source>
</evidence>
<evidence type="ECO:0000269" key="7">
    <source>
    </source>
</evidence>
<evidence type="ECO:0000269" key="8">
    <source>
    </source>
</evidence>
<evidence type="ECO:0000269" key="9">
    <source>
    </source>
</evidence>
<evidence type="ECO:0000269" key="10">
    <source>
    </source>
</evidence>
<evidence type="ECO:0000269" key="11">
    <source>
    </source>
</evidence>
<evidence type="ECO:0000269" key="12">
    <source>
    </source>
</evidence>
<evidence type="ECO:0000269" key="13">
    <source>
    </source>
</evidence>
<evidence type="ECO:0000269" key="14">
    <source>
    </source>
</evidence>
<evidence type="ECO:0000269" key="15">
    <source>
    </source>
</evidence>
<evidence type="ECO:0000269" key="16">
    <source>
    </source>
</evidence>
<evidence type="ECO:0000305" key="17"/>
<comment type="function">
    <text evidence="7 9 10 11 12">Serine/threonine kinase which acts as an essential component of the MAP kinase signal transduction pathway. Plays an important role in the cascades of cellular responses evoked by changes in the environment. Mediates signaling for determination of cell fate such as differentiation and survival. Plays a crucial role in the apoptosis signal transduction pathway through mitochondria-dependent caspase activation. MAP3K5/ASK1 is required for the innate immune response, which is essential for host defense against a wide range of pathogens. Mediates signal transduction of various stressors like oxidative stress as well as by receptor-mediated inflammatory signals, such as the tumor necrosis factor (TNF) or lipopolysaccharide (LPS). Once activated, acts as an upstream activator of the MKK/JNK signal transduction cascade and the p38 MAPK signal transduction cascade through the phosphorylation and activation of several MAP kinase kinases like MAP2K4/SEK1, MAP2K3/MKK3, MAP2K6/MKK6 and MAP2K7/MKK7. These MAP2Ks in turn activate p38 MAPKs and c-jun N-terminal kinases (JNKs). Both p38 MAPK and JNKs control the transcription factors activator protein-1 (AP-1).</text>
</comment>
<comment type="catalytic activity">
    <reaction evidence="12">
        <text>L-seryl-[protein] + ATP = O-phospho-L-seryl-[protein] + ADP + H(+)</text>
        <dbReference type="Rhea" id="RHEA:17989"/>
        <dbReference type="Rhea" id="RHEA-COMP:9863"/>
        <dbReference type="Rhea" id="RHEA-COMP:11604"/>
        <dbReference type="ChEBI" id="CHEBI:15378"/>
        <dbReference type="ChEBI" id="CHEBI:29999"/>
        <dbReference type="ChEBI" id="CHEBI:30616"/>
        <dbReference type="ChEBI" id="CHEBI:83421"/>
        <dbReference type="ChEBI" id="CHEBI:456216"/>
        <dbReference type="EC" id="2.7.11.25"/>
    </reaction>
</comment>
<comment type="catalytic activity">
    <reaction evidence="12">
        <text>L-threonyl-[protein] + ATP = O-phospho-L-threonyl-[protein] + ADP + H(+)</text>
        <dbReference type="Rhea" id="RHEA:46608"/>
        <dbReference type="Rhea" id="RHEA-COMP:11060"/>
        <dbReference type="Rhea" id="RHEA-COMP:11605"/>
        <dbReference type="ChEBI" id="CHEBI:15378"/>
        <dbReference type="ChEBI" id="CHEBI:30013"/>
        <dbReference type="ChEBI" id="CHEBI:30616"/>
        <dbReference type="ChEBI" id="CHEBI:61977"/>
        <dbReference type="ChEBI" id="CHEBI:456216"/>
        <dbReference type="EC" id="2.7.11.25"/>
    </reaction>
</comment>
<comment type="cofactor">
    <cofactor evidence="1">
        <name>Mg(2+)</name>
        <dbReference type="ChEBI" id="CHEBI:18420"/>
    </cofactor>
</comment>
<comment type="activity regulation">
    <text evidence="8 10 12">Activated by various stressors, including oxidative stress, endoplasmic reticulum stress, and calcium overload, as well as by receptor-mediated inflammatory signals, such as the tumor necrosis factor (TNF) and lipopolysaccharide (LPS). Homophilic association of MAP3K5/ASK1 through the C-terminal coiled-coil domains and the heteromeric complex formation of MAP3K5/ASK1 with the reduced form of thioredoxin (TXN), constitutes an inactive form of the kinase. Upon ROS-induced dissociation of TXN from MAP3K5/ASK1, TRAF2 and TRAF6 are reciprocally recruited to MAP3K5/ASK1 and form the active MAP3K5/ASK1 signalosome, in which TRAF2 and TRAF6 appear to facilitate the active configuration of MAP3K5/ASK1. MAP3K5/ASK1 activity is also regulated through several phosphorylation and dephosphorylation events. Thr-845 is an activating phosphorylation site that is autophosphorylated and phosphorylated by MAP3K6/ASK2 and dephosphorylated by PPP5C. Ser-90 and Ser-1040 are inactivating phosphorylation sites, the former of which is phosphorylated by AKT1. Phosphorylation of Ser-973 induces association of MAP3K5/ASK1 with the 14-3-3 family proteins, which suppresses MAP3K5/ASK1 activity. Calcium/calmodulin-activated protein phosphatase calcineurin (PPP3CA) has been shown to directly dephosphorylate this site. SOCS1 binds to ASK1 by recognizing phosphorylation of Tyr-725 and induces MAP3K5/ASK1 degradation in endothelial cells. Also dephosphorylated and activated by PGAM5. Contains an N-terminal autoinhibitory domain.</text>
</comment>
<comment type="subunit">
    <text evidence="2 10 12 13 15">Homodimer when inactive (By similarity). Binds both upstream activators and downstream substrates in multimolecular complexes. Part of a cytoplasmic complex made of HIPK1, DAB2IP and MAP3K5 in response to TNF (By similarity). This complex formation promotes MAP3K5-JNK activation and subsequent apoptosis (By similarity). Interacts with SOCS1 which recognizes phosphorylation of Tyr-725 and induces MAP3K5/ASK1 degradation in endothelial cells (By similarity). Interacts with the 14-3-3 family proteins such as YWHAB, YWHAE, YWHAQ, YWHAH, YWHAZ and SFN (By similarity). Interacts with ARRB2, BIRC2, DAB2IP, IGF1R, MAP3K6/ASK2, PIM1, PGAM5, SOCS1, STUB1, TRAF2 and TXN (By similarity). Interacts with ERN1 in a TRAF2-dependent manner (By similarity). Interacts with calcineurin subunit PPP3R1, PPP5C, PPM1L and TRAF6 (PubMed:15864310, PubMed:16648474, PubMed:17456047, PubMed:22399290). Interacts (via N-terminus) with RAF1 and this interaction inhibits the proapoptotic function of MAP3K5. Interacts with DAB2IP (via N-terminus C2 domain); the interaction occurs in a TNF-alpha-dependent manner (By similarity). Interacts with DUSP13A; may positively regulate apoptosis (By similarity). Interacts with PPIA/CYPA (By similarity). Interacts with PRMT1; the interaction results in MAP3K5 methylation by PRMT1 which inhibits MAP3K5 activation (By similarity). Interacts with TRAF2; the interaction is inhibited by PRMT1 (By similarity). Interacts with TRIM48 (By similarity).</text>
</comment>
<comment type="interaction">
    <interactant intactId="EBI-777493">
        <id>O35099</id>
    </interactant>
    <interactant intactId="EBI-6666164">
        <id>Q63810</id>
        <label>Ppp3r1</label>
    </interactant>
    <organismsDiffer>false</organismsDiffer>
    <experiments>3</experiments>
</comment>
<comment type="interaction">
    <interactant intactId="EBI-777493">
        <id>O35099</id>
    </interactant>
    <interactant intactId="EBI-309205">
        <id>Q9D1C8</id>
        <label>Vps28</label>
    </interactant>
    <organismsDiffer>false</organismsDiffer>
    <experiments>3</experiments>
</comment>
<comment type="subcellular location">
    <subcellularLocation>
        <location evidence="2">Cytoplasm</location>
    </subcellularLocation>
    <subcellularLocation>
        <location evidence="1">Endoplasmic reticulum</location>
    </subcellularLocation>
    <text evidence="1">Interaction with 14-3-3 proteins alters the distribution of MAP3K5/ASK1 and restricts it to the perinuclear endoplasmic reticulum region.</text>
</comment>
<comment type="tissue specificity">
    <text evidence="16">Expressed in various adult mouse tissues including heart, brain, lung, liver and kidney.</text>
</comment>
<comment type="PTM">
    <text evidence="2 8 12 14 15">Ser-90 and Ser-1040 are inactivating phosphorylation sites, the former of which is phosphorylated by AKT1 (By similarity). Phosphorylated at Ser-973 which induces association of MAP3K5/ASK1 with the 14-3-3 family proteins and suppresses MAP3K5/ASK1 activity (PubMed:16648474). Calcineurin (CN) dephosphorylates this site. Also dephosphorylated and activated by PGAM5 (By similarity). Phosphorylated at Thr-845 through autophosphorylation and by MAP3K6/ASK2 which leads to activation (PubMed:11920685, PubMed:18948261, PubMed:22399290). Thr-845 is dephosphorylated by PPP5C (PubMed:22399290). Phosphorylation at Ser-973 in response to oxidative stress is negatively regulated by PPIA/CYPA (By similarity).</text>
</comment>
<comment type="PTM">
    <text evidence="2">Ubiquitinated. Tumor necrosis factor (TNF) induces TNFR2-dependent ubiquitination, leading to proteasomal degradation. Ubiquitinated by RC3H2 in a TRIM48-dependent manner.</text>
</comment>
<comment type="PTM">
    <text evidence="2">Methylation at Arg-85 and Arg-87 by PRMT1 promotes association of MAP3K5 with thioredoxin and negatively regulates MAP3K5 association with TRAF2, inhibiting MAP3K5 activation. Methylation is blocked by ubiquitination of PRMT1 by TRIM48.</text>
</comment>
<comment type="similarity">
    <text evidence="17">Belongs to the protein kinase superfamily. STE Ser/Thr protein kinase family. MAP kinase kinase kinase subfamily.</text>
</comment>
<proteinExistence type="evidence at protein level"/>
<feature type="chain" id="PRO_0000086250" description="Mitogen-activated protein kinase kinase kinase 5">
    <location>
        <begin position="1"/>
        <end position="1380"/>
    </location>
</feature>
<feature type="domain" description="Protein kinase" evidence="4">
    <location>
        <begin position="687"/>
        <end position="945"/>
    </location>
</feature>
<feature type="region of interest" description="Disordered" evidence="6">
    <location>
        <begin position="30"/>
        <end position="97"/>
    </location>
</feature>
<feature type="region of interest" description="Interaction with PPIA/CYPA" evidence="2">
    <location>
        <begin position="649"/>
        <end position="1374"/>
    </location>
</feature>
<feature type="region of interest" description="Disordered" evidence="6">
    <location>
        <begin position="1188"/>
        <end position="1215"/>
    </location>
</feature>
<feature type="coiled-coil region" evidence="3">
    <location>
        <begin position="1252"/>
        <end position="1292"/>
    </location>
</feature>
<feature type="compositionally biased region" description="Low complexity" evidence="6">
    <location>
        <begin position="37"/>
        <end position="49"/>
    </location>
</feature>
<feature type="compositionally biased region" description="Pro residues" evidence="6">
    <location>
        <begin position="50"/>
        <end position="59"/>
    </location>
</feature>
<feature type="compositionally biased region" description="Acidic residues" evidence="6">
    <location>
        <begin position="1192"/>
        <end position="1206"/>
    </location>
</feature>
<feature type="active site" description="Proton acceptor" evidence="4 5">
    <location>
        <position position="810"/>
    </location>
</feature>
<feature type="binding site" evidence="4">
    <location>
        <begin position="693"/>
        <end position="701"/>
    </location>
    <ligand>
        <name>ATP</name>
        <dbReference type="ChEBI" id="CHEBI:30616"/>
    </ligand>
</feature>
<feature type="binding site" evidence="4">
    <location>
        <position position="716"/>
    </location>
    <ligand>
        <name>ATP</name>
        <dbReference type="ChEBI" id="CHEBI:30616"/>
    </ligand>
</feature>
<feature type="modified residue" description="Asymmetric dimethylarginine" evidence="2">
    <location>
        <position position="85"/>
    </location>
</feature>
<feature type="modified residue" description="Asymmetric dimethylarginine" evidence="2">
    <location>
        <position position="87"/>
    </location>
</feature>
<feature type="modified residue" description="Phosphoserine; by PIM1 and PKB/AKT1" evidence="2">
    <location>
        <position position="90"/>
    </location>
</feature>
<feature type="modified residue" description="Phosphotyrosine" evidence="2">
    <location>
        <position position="725"/>
    </location>
</feature>
<feature type="modified residue" description="Phosphothreonine; by autocatalysis" evidence="2">
    <location>
        <position position="820"/>
    </location>
</feature>
<feature type="modified residue" description="Phosphothreonine; by autocatalysis, MELK and MAP3K6" evidence="8 14 15">
    <location>
        <position position="845"/>
    </location>
</feature>
<feature type="modified residue" description="Phosphothreonine; by autocatalysis" evidence="8">
    <location>
        <position position="849"/>
    </location>
</feature>
<feature type="modified residue" description="Phosphoserine" evidence="2">
    <location>
        <position position="965"/>
    </location>
</feature>
<feature type="modified residue" description="Phosphoserine; by autocatalysis" evidence="12">
    <location>
        <position position="973"/>
    </location>
</feature>
<feature type="modified residue" description="Phosphoserine" evidence="2">
    <location>
        <position position="1036"/>
    </location>
</feature>
<feature type="modified residue" description="Phosphoserine" evidence="2">
    <location>
        <position position="1040"/>
    </location>
</feature>
<feature type="sequence conflict" description="In Ref. 1; BAA23648." evidence="17" ref="1">
    <original>A</original>
    <variation>T</variation>
    <location>
        <position position="166"/>
    </location>
</feature>
<feature type="sequence conflict" description="In Ref. 1; BAA23648." evidence="17" ref="1">
    <original>RRN</original>
    <variation>TRT</variation>
    <location>
        <begin position="368"/>
        <end position="370"/>
    </location>
</feature>
<feature type="sequence conflict" description="In Ref. 1; BAA23648." evidence="17" ref="1">
    <original>K</original>
    <variation>N</variation>
    <location>
        <position position="1090"/>
    </location>
</feature>
<dbReference type="EC" id="2.7.11.25" evidence="12"/>
<dbReference type="EMBL" id="AB006787">
    <property type="protein sequence ID" value="BAA23648.3"/>
    <property type="molecule type" value="mRNA"/>
</dbReference>
<dbReference type="EMBL" id="BC116627">
    <property type="protein sequence ID" value="AAI16628.1"/>
    <property type="molecule type" value="mRNA"/>
</dbReference>
<dbReference type="EMBL" id="BC133697">
    <property type="protein sequence ID" value="AAI33698.1"/>
    <property type="molecule type" value="mRNA"/>
</dbReference>
<dbReference type="CCDS" id="CCDS35857.1"/>
<dbReference type="PIR" id="JC5778">
    <property type="entry name" value="JC5778"/>
</dbReference>
<dbReference type="RefSeq" id="NP_032606.4">
    <property type="nucleotide sequence ID" value="NM_008580.4"/>
</dbReference>
<dbReference type="SMR" id="O35099"/>
<dbReference type="BioGRID" id="204961">
    <property type="interactions" value="25"/>
</dbReference>
<dbReference type="CORUM" id="O35099"/>
<dbReference type="DIP" id="DIP-38055N"/>
<dbReference type="FunCoup" id="O35099">
    <property type="interactions" value="1660"/>
</dbReference>
<dbReference type="IntAct" id="O35099">
    <property type="interactions" value="15"/>
</dbReference>
<dbReference type="MINT" id="O35099"/>
<dbReference type="STRING" id="10090.ENSMUSP00000093485"/>
<dbReference type="ChEMBL" id="CHEMBL4879411"/>
<dbReference type="GlyGen" id="O35099">
    <property type="glycosylation" value="1 site, 1 O-linked glycan (1 site)"/>
</dbReference>
<dbReference type="iPTMnet" id="O35099"/>
<dbReference type="PhosphoSitePlus" id="O35099"/>
<dbReference type="jPOST" id="O35099"/>
<dbReference type="PaxDb" id="10090-ENSMUSP00000093485"/>
<dbReference type="ProteomicsDB" id="252700"/>
<dbReference type="Antibodypedia" id="3592">
    <property type="antibodies" value="1553 antibodies from 44 providers"/>
</dbReference>
<dbReference type="DNASU" id="26408"/>
<dbReference type="Ensembl" id="ENSMUST00000095806.10">
    <property type="protein sequence ID" value="ENSMUSP00000093485.4"/>
    <property type="gene ID" value="ENSMUSG00000071369.12"/>
</dbReference>
<dbReference type="GeneID" id="26408"/>
<dbReference type="KEGG" id="mmu:26408"/>
<dbReference type="UCSC" id="uc007enm.2">
    <property type="organism name" value="mouse"/>
</dbReference>
<dbReference type="AGR" id="MGI:1346876"/>
<dbReference type="CTD" id="4217"/>
<dbReference type="MGI" id="MGI:1346876">
    <property type="gene designation" value="Map3k5"/>
</dbReference>
<dbReference type="VEuPathDB" id="HostDB:ENSMUSG00000071369"/>
<dbReference type="eggNOG" id="KOG4279">
    <property type="taxonomic scope" value="Eukaryota"/>
</dbReference>
<dbReference type="GeneTree" id="ENSGT00940000159155"/>
<dbReference type="InParanoid" id="O35099"/>
<dbReference type="OMA" id="CLAHSKN"/>
<dbReference type="OrthoDB" id="275301at2759"/>
<dbReference type="PhylomeDB" id="O35099"/>
<dbReference type="TreeFam" id="TF105115"/>
<dbReference type="BRENDA" id="2.7.12.2">
    <property type="organism ID" value="3474"/>
</dbReference>
<dbReference type="Reactome" id="R-MMU-2559580">
    <property type="pathway name" value="Oxidative Stress Induced Senescence"/>
</dbReference>
<dbReference type="BioGRID-ORCS" id="26408">
    <property type="hits" value="3 hits in 80 CRISPR screens"/>
</dbReference>
<dbReference type="ChiTaRS" id="Map3k5">
    <property type="organism name" value="mouse"/>
</dbReference>
<dbReference type="PRO" id="PR:O35099"/>
<dbReference type="Proteomes" id="UP000000589">
    <property type="component" value="Chromosome 10"/>
</dbReference>
<dbReference type="RNAct" id="O35099">
    <property type="molecule type" value="protein"/>
</dbReference>
<dbReference type="Bgee" id="ENSMUSG00000071369">
    <property type="expression patterns" value="Expressed in ciliary body and 267 other cell types or tissues"/>
</dbReference>
<dbReference type="ExpressionAtlas" id="O35099">
    <property type="expression patterns" value="baseline and differential"/>
</dbReference>
<dbReference type="GO" id="GO:0009897">
    <property type="term" value="C:external side of plasma membrane"/>
    <property type="evidence" value="ECO:0007669"/>
    <property type="project" value="Ensembl"/>
</dbReference>
<dbReference type="GO" id="GO:1990604">
    <property type="term" value="C:IRE1-TRAF2-ASK1 complex"/>
    <property type="evidence" value="ECO:0007669"/>
    <property type="project" value="Ensembl"/>
</dbReference>
<dbReference type="GO" id="GO:1902911">
    <property type="term" value="C:protein kinase complex"/>
    <property type="evidence" value="ECO:0007669"/>
    <property type="project" value="Ensembl"/>
</dbReference>
<dbReference type="GO" id="GO:0005524">
    <property type="term" value="F:ATP binding"/>
    <property type="evidence" value="ECO:0000250"/>
    <property type="project" value="UniProtKB"/>
</dbReference>
<dbReference type="GO" id="GO:0004706">
    <property type="term" value="F:JUN kinase kinase kinase activity"/>
    <property type="evidence" value="ECO:0007669"/>
    <property type="project" value="Ensembl"/>
</dbReference>
<dbReference type="GO" id="GO:0000287">
    <property type="term" value="F:magnesium ion binding"/>
    <property type="evidence" value="ECO:0000250"/>
    <property type="project" value="UniProtKB"/>
</dbReference>
<dbReference type="GO" id="GO:0004709">
    <property type="term" value="F:MAP kinase kinase kinase activity"/>
    <property type="evidence" value="ECO:0000314"/>
    <property type="project" value="UniProtKB"/>
</dbReference>
<dbReference type="GO" id="GO:0019904">
    <property type="term" value="F:protein domain specific binding"/>
    <property type="evidence" value="ECO:0007669"/>
    <property type="project" value="Ensembl"/>
</dbReference>
<dbReference type="GO" id="GO:0042803">
    <property type="term" value="F:protein homodimerization activity"/>
    <property type="evidence" value="ECO:0000250"/>
    <property type="project" value="UniProtKB"/>
</dbReference>
<dbReference type="GO" id="GO:0019901">
    <property type="term" value="F:protein kinase binding"/>
    <property type="evidence" value="ECO:0000353"/>
    <property type="project" value="UniProtKB"/>
</dbReference>
<dbReference type="GO" id="GO:0019903">
    <property type="term" value="F:protein phosphatase binding"/>
    <property type="evidence" value="ECO:0007669"/>
    <property type="project" value="Ensembl"/>
</dbReference>
<dbReference type="GO" id="GO:0106310">
    <property type="term" value="F:protein serine kinase activity"/>
    <property type="evidence" value="ECO:0007669"/>
    <property type="project" value="RHEA"/>
</dbReference>
<dbReference type="GO" id="GO:0034198">
    <property type="term" value="P:cellular response to amino acid starvation"/>
    <property type="evidence" value="ECO:0007669"/>
    <property type="project" value="Ensembl"/>
</dbReference>
<dbReference type="GO" id="GO:0070301">
    <property type="term" value="P:cellular response to hydrogen peroxide"/>
    <property type="evidence" value="ECO:0007669"/>
    <property type="project" value="Ensembl"/>
</dbReference>
<dbReference type="GO" id="GO:1902170">
    <property type="term" value="P:cellular response to reactive nitrogen species"/>
    <property type="evidence" value="ECO:0000315"/>
    <property type="project" value="MGI"/>
</dbReference>
<dbReference type="GO" id="GO:0071356">
    <property type="term" value="P:cellular response to tumor necrosis factor"/>
    <property type="evidence" value="ECO:0007669"/>
    <property type="project" value="Ensembl"/>
</dbReference>
<dbReference type="GO" id="GO:0072577">
    <property type="term" value="P:endothelial cell apoptotic process"/>
    <property type="evidence" value="ECO:0007669"/>
    <property type="project" value="Ensembl"/>
</dbReference>
<dbReference type="GO" id="GO:0045087">
    <property type="term" value="P:innate immune response"/>
    <property type="evidence" value="ECO:0007669"/>
    <property type="project" value="UniProtKB-KW"/>
</dbReference>
<dbReference type="GO" id="GO:0070059">
    <property type="term" value="P:intrinsic apoptotic signaling pathway in response to endoplasmic reticulum stress"/>
    <property type="evidence" value="ECO:0000315"/>
    <property type="project" value="ParkinsonsUK-UCL"/>
</dbReference>
<dbReference type="GO" id="GO:0008631">
    <property type="term" value="P:intrinsic apoptotic signaling pathway in response to oxidative stress"/>
    <property type="evidence" value="ECO:0000314"/>
    <property type="project" value="MGI"/>
</dbReference>
<dbReference type="GO" id="GO:0007254">
    <property type="term" value="P:JNK cascade"/>
    <property type="evidence" value="ECO:0000250"/>
    <property type="project" value="UniProtKB"/>
</dbReference>
<dbReference type="GO" id="GO:0000165">
    <property type="term" value="P:MAPK cascade"/>
    <property type="evidence" value="ECO:0000250"/>
    <property type="project" value="UniProtKB"/>
</dbReference>
<dbReference type="GO" id="GO:0051402">
    <property type="term" value="P:neuron apoptotic process"/>
    <property type="evidence" value="ECO:0000315"/>
    <property type="project" value="ParkinsonsUK-UCL"/>
</dbReference>
<dbReference type="GO" id="GO:0036480">
    <property type="term" value="P:neuron intrinsic apoptotic signaling pathway in response to oxidative stress"/>
    <property type="evidence" value="ECO:0007669"/>
    <property type="project" value="Ensembl"/>
</dbReference>
<dbReference type="GO" id="GO:0038066">
    <property type="term" value="P:p38MAPK cascade"/>
    <property type="evidence" value="ECO:0000270"/>
    <property type="project" value="CACAO"/>
</dbReference>
<dbReference type="GO" id="GO:0043065">
    <property type="term" value="P:positive regulation of apoptotic process"/>
    <property type="evidence" value="ECO:0000314"/>
    <property type="project" value="UniProtKB"/>
</dbReference>
<dbReference type="GO" id="GO:0010666">
    <property type="term" value="P:positive regulation of cardiac muscle cell apoptotic process"/>
    <property type="evidence" value="ECO:0007669"/>
    <property type="project" value="Ensembl"/>
</dbReference>
<dbReference type="GO" id="GO:0045893">
    <property type="term" value="P:positive regulation of DNA-templated transcription"/>
    <property type="evidence" value="ECO:0007669"/>
    <property type="project" value="Ensembl"/>
</dbReference>
<dbReference type="GO" id="GO:0046330">
    <property type="term" value="P:positive regulation of JNK cascade"/>
    <property type="evidence" value="ECO:0000315"/>
    <property type="project" value="ParkinsonsUK-UCL"/>
</dbReference>
<dbReference type="GO" id="GO:0043410">
    <property type="term" value="P:positive regulation of MAPK cascade"/>
    <property type="evidence" value="ECO:0000314"/>
    <property type="project" value="MGI"/>
</dbReference>
<dbReference type="GO" id="GO:0045663">
    <property type="term" value="P:positive regulation of myoblast differentiation"/>
    <property type="evidence" value="ECO:0000314"/>
    <property type="project" value="CACAO"/>
</dbReference>
<dbReference type="GO" id="GO:1900745">
    <property type="term" value="P:positive regulation of p38MAPK cascade"/>
    <property type="evidence" value="ECO:0007669"/>
    <property type="project" value="Ensembl"/>
</dbReference>
<dbReference type="GO" id="GO:1904707">
    <property type="term" value="P:positive regulation of vascular associated smooth muscle cell proliferation"/>
    <property type="evidence" value="ECO:0007669"/>
    <property type="project" value="Ensembl"/>
</dbReference>
<dbReference type="GO" id="GO:0097300">
    <property type="term" value="P:programmed necrotic cell death"/>
    <property type="evidence" value="ECO:0000315"/>
    <property type="project" value="MGI"/>
</dbReference>
<dbReference type="GO" id="GO:0043067">
    <property type="term" value="P:regulation of programmed cell death"/>
    <property type="evidence" value="ECO:0000316"/>
    <property type="project" value="MGI"/>
</dbReference>
<dbReference type="GO" id="GO:0034976">
    <property type="term" value="P:response to endoplasmic reticulum stress"/>
    <property type="evidence" value="ECO:0000315"/>
    <property type="project" value="ParkinsonsUK-UCL"/>
</dbReference>
<dbReference type="GO" id="GO:0002931">
    <property type="term" value="P:response to ischemia"/>
    <property type="evidence" value="ECO:0007669"/>
    <property type="project" value="Ensembl"/>
</dbReference>
<dbReference type="GO" id="GO:0051403">
    <property type="term" value="P:stress-activated MAPK cascade"/>
    <property type="evidence" value="ECO:0007669"/>
    <property type="project" value="Ensembl"/>
</dbReference>
<dbReference type="CDD" id="cd06624">
    <property type="entry name" value="STKc_ASK"/>
    <property type="match status" value="1"/>
</dbReference>
<dbReference type="FunFam" id="1.10.510.10:FF:000054">
    <property type="entry name" value="Mitogen-activated protein kinase kinase kinase 5"/>
    <property type="match status" value="1"/>
</dbReference>
<dbReference type="FunFam" id="3.30.200.20:FF:000067">
    <property type="entry name" value="Mitogen-activated protein kinase kinase kinase 5"/>
    <property type="match status" value="1"/>
</dbReference>
<dbReference type="Gene3D" id="3.30.200.20">
    <property type="entry name" value="Phosphorylase Kinase, domain 1"/>
    <property type="match status" value="1"/>
</dbReference>
<dbReference type="Gene3D" id="1.10.510.10">
    <property type="entry name" value="Transferase(Phosphotransferase) domain 1"/>
    <property type="match status" value="1"/>
</dbReference>
<dbReference type="InterPro" id="IPR046872">
    <property type="entry name" value="DRHyd-ASK"/>
</dbReference>
<dbReference type="InterPro" id="IPR046873">
    <property type="entry name" value="HisK-N-like"/>
</dbReference>
<dbReference type="InterPro" id="IPR011009">
    <property type="entry name" value="Kinase-like_dom_sf"/>
</dbReference>
<dbReference type="InterPro" id="IPR043969">
    <property type="entry name" value="MAP3K_PH"/>
</dbReference>
<dbReference type="InterPro" id="IPR025136">
    <property type="entry name" value="MAP3K_TRAF-bd"/>
</dbReference>
<dbReference type="InterPro" id="IPR000719">
    <property type="entry name" value="Prot_kinase_dom"/>
</dbReference>
<dbReference type="InterPro" id="IPR017441">
    <property type="entry name" value="Protein_kinase_ATP_BS"/>
</dbReference>
<dbReference type="InterPro" id="IPR013761">
    <property type="entry name" value="SAM/pointed_sf"/>
</dbReference>
<dbReference type="InterPro" id="IPR008271">
    <property type="entry name" value="Ser/Thr_kinase_AS"/>
</dbReference>
<dbReference type="PANTHER" id="PTHR11584:SF332">
    <property type="entry name" value="MITOGEN-ACTIVATED PROTEIN KINASE KINASE KINASE 5"/>
    <property type="match status" value="1"/>
</dbReference>
<dbReference type="PANTHER" id="PTHR11584">
    <property type="entry name" value="SERINE/THREONINE PROTEIN KINASE"/>
    <property type="match status" value="1"/>
</dbReference>
<dbReference type="Pfam" id="PF19039">
    <property type="entry name" value="ASK_PH"/>
    <property type="match status" value="1"/>
</dbReference>
<dbReference type="Pfam" id="PF20309">
    <property type="entry name" value="DRHyd-ASK"/>
    <property type="match status" value="1"/>
</dbReference>
<dbReference type="Pfam" id="PF20302">
    <property type="entry name" value="HisK-N-like"/>
    <property type="match status" value="1"/>
</dbReference>
<dbReference type="Pfam" id="PF13281">
    <property type="entry name" value="MAP3K_TRAF_bd"/>
    <property type="match status" value="1"/>
</dbReference>
<dbReference type="Pfam" id="PF00069">
    <property type="entry name" value="Pkinase"/>
    <property type="match status" value="1"/>
</dbReference>
<dbReference type="SMART" id="SM00220">
    <property type="entry name" value="S_TKc"/>
    <property type="match status" value="1"/>
</dbReference>
<dbReference type="SUPFAM" id="SSF56112">
    <property type="entry name" value="Protein kinase-like (PK-like)"/>
    <property type="match status" value="1"/>
</dbReference>
<dbReference type="SUPFAM" id="SSF47769">
    <property type="entry name" value="SAM/Pointed domain"/>
    <property type="match status" value="1"/>
</dbReference>
<dbReference type="PROSITE" id="PS00107">
    <property type="entry name" value="PROTEIN_KINASE_ATP"/>
    <property type="match status" value="1"/>
</dbReference>
<dbReference type="PROSITE" id="PS50011">
    <property type="entry name" value="PROTEIN_KINASE_DOM"/>
    <property type="match status" value="1"/>
</dbReference>
<dbReference type="PROSITE" id="PS00108">
    <property type="entry name" value="PROTEIN_KINASE_ST"/>
    <property type="match status" value="1"/>
</dbReference>
<gene>
    <name type="primary">Map3k5</name>
    <name type="synonym">Ask1</name>
    <name type="synonym">Mekk5</name>
</gene>
<name>M3K5_MOUSE</name>
<organism>
    <name type="scientific">Mus musculus</name>
    <name type="common">Mouse</name>
    <dbReference type="NCBI Taxonomy" id="10090"/>
    <lineage>
        <taxon>Eukaryota</taxon>
        <taxon>Metazoa</taxon>
        <taxon>Chordata</taxon>
        <taxon>Craniata</taxon>
        <taxon>Vertebrata</taxon>
        <taxon>Euteleostomi</taxon>
        <taxon>Mammalia</taxon>
        <taxon>Eutheria</taxon>
        <taxon>Euarchontoglires</taxon>
        <taxon>Glires</taxon>
        <taxon>Rodentia</taxon>
        <taxon>Myomorpha</taxon>
        <taxon>Muroidea</taxon>
        <taxon>Muridae</taxon>
        <taxon>Murinae</taxon>
        <taxon>Mus</taxon>
        <taxon>Mus</taxon>
    </lineage>
</organism>
<sequence length="1380" mass="154512">MGTEAGEGITFSVPPFASVGFCTIPEGGSCRRGGGAATAAEGEPSLQPLLVPPPPPPPGSFWNVESAAAPGTSCPTTAPGSSATRGRGNSGSGGGRRTTVAYVINEASQGQLVVAESEALQSLREACEAVGATLETLHFGKLDFGETAVLDRFYNADIAVVEMSDAFRQPSLFYHLGVRESFSMANNIILYCDTNSDSLQSLKEIICQKNTVCTGNYTFIPYMVTPHNKVYCCDSSFMKGLTELMQPNFELLLGPICLPLVDRFVQLLKVAQASSSQYFRESILSDIRKARNLYTGKELAAELARIRQRVDNIEVLTADIVINLLLSYRDIQDYDSIVKLVETLEKLPTFDLASHHHVKFHYAFALNRRNLPGDRAKALDIMIPMVQSEEQVASDMYCLVGRIYKDMFLDSNFTDTESRDHGASWFKKAFESEPTLQSGINYAVLLLAAGHQFESSFELRKVGVKLSSLLGKKGNLEKLQSYWEVGFFLGASVLANDHLRVIQASEKLFRLKTPAWYLKSIVETILIYKHFVKLTTEQPSAKQELVDFWMDFLVEATKTDVTVVRFPVLILEPTKIYQPSYLSINNEVEEKTISIWHVLPDDKKGIHEWNFGASSVRGVSISKFEERCCFLYVLHNSDDFQIYFCTELHCKRFFEMVNTITEEKGRGAEDGDCEGDSLEYDYEYDENGDRVVLGKGTYGIVYAGRDLSNQVRIAIKEIPERDSRYSQPLHEEIALHKHLKHKNIVQYLGSFSENGFIKIFMEQVPGGSLSALLRSKWGPLKDNEQTIGFYTKQILEGLKYLHDNQIVHRDIKGDNVLINTYSGVLKISDFGTSKRLAGINPCTETFTGTLQYMAPEIIDKGPRGYGKAADIWSLGCTIIEMATGKPPFYELGEPQAAMFKVGMFKVHPEIPESMSAEAKAFILKCFEPDPDKRACANDLLIDEFLKVSSKKKKTQPKLSALSTGSNEYLRSISLPVPVLVEDTSSSSEYGSVSPDTELKADPFSFKARAKSCGEKDGKGIRTLFLGIPDENFEDHSAPPSPEEKDSGFFMLRKDSERRATLHRILTEDQDKVVRNLMESLAQGAEEPKLKWEHITTLISSLREFVRSTDRKIIATTLSKLKLELDFDSHGISQVQVVLFGFQDAVNKVLRNHNIKPHWMFALDSIIRKAVQTAITILVPELRPHFSLASESDTADPEDLDVEDEHEELSSNQTVRRPQAITEDAVATSGVSTLSSTVSHDSQNAHRSLNVQLGRMKIETNRLLEELVRKERELQALLHQAIEEKDQEIRHLKLKSQPIDIPGFPVCHLNSPGTTTEDSELPGWLRENGADEDTISRFLAEDYTLVDVLYYVTRDDLKCLRLRGGMLCTLWKAIIDFRNKC</sequence>
<keyword id="KW-0053">Apoptosis</keyword>
<keyword id="KW-0067">ATP-binding</keyword>
<keyword id="KW-0175">Coiled coil</keyword>
<keyword id="KW-0963">Cytoplasm</keyword>
<keyword id="KW-0256">Endoplasmic reticulum</keyword>
<keyword id="KW-0391">Immunity</keyword>
<keyword id="KW-0399">Innate immunity</keyword>
<keyword id="KW-0418">Kinase</keyword>
<keyword id="KW-0460">Magnesium</keyword>
<keyword id="KW-0479">Metal-binding</keyword>
<keyword id="KW-0488">Methylation</keyword>
<keyword id="KW-0547">Nucleotide-binding</keyword>
<keyword id="KW-0597">Phosphoprotein</keyword>
<keyword id="KW-1185">Reference proteome</keyword>
<keyword id="KW-0723">Serine/threonine-protein kinase</keyword>
<keyword id="KW-0346">Stress response</keyword>
<keyword id="KW-0808">Transferase</keyword>
<keyword id="KW-0832">Ubl conjugation</keyword>
<accession>O35099</accession>
<accession>Q14AY5</accession>
<protein>
    <recommendedName>
        <fullName>Mitogen-activated protein kinase kinase kinase 5</fullName>
        <ecNumber evidence="12">2.7.11.25</ecNumber>
    </recommendedName>
    <alternativeName>
        <fullName>Apoptosis signal-regulating kinase 1</fullName>
        <shortName>ASK-1</shortName>
    </alternativeName>
    <alternativeName>
        <fullName>MAPK/ERK kinase kinase 5</fullName>
        <shortName>MEK kinase 5</shortName>
        <shortName>MEKK 5</shortName>
    </alternativeName>
</protein>